<keyword id="KW-0240">DNA-directed RNA polymerase</keyword>
<keyword id="KW-0548">Nucleotidyltransferase</keyword>
<keyword id="KW-1185">Reference proteome</keyword>
<keyword id="KW-0804">Transcription</keyword>
<keyword id="KW-0808">Transferase</keyword>
<feature type="chain" id="PRO_0000237529" description="DNA-directed RNA polymerase subunit omega">
    <location>
        <begin position="1"/>
        <end position="142"/>
    </location>
</feature>
<feature type="region of interest" description="Disordered" evidence="2">
    <location>
        <begin position="104"/>
        <end position="142"/>
    </location>
</feature>
<feature type="compositionally biased region" description="Acidic residues" evidence="2">
    <location>
        <begin position="108"/>
        <end position="142"/>
    </location>
</feature>
<protein>
    <recommendedName>
        <fullName evidence="1">DNA-directed RNA polymerase subunit omega</fullName>
        <shortName evidence="1">RNAP omega subunit</shortName>
        <ecNumber evidence="1">2.7.7.6</ecNumber>
    </recommendedName>
    <alternativeName>
        <fullName evidence="1">RNA polymerase omega subunit</fullName>
    </alternativeName>
    <alternativeName>
        <fullName evidence="1">Transcriptase subunit omega</fullName>
    </alternativeName>
</protein>
<dbReference type="EC" id="2.7.7.6" evidence="1"/>
<dbReference type="EMBL" id="AE017321">
    <property type="protein sequence ID" value="AAW70975.1"/>
    <property type="molecule type" value="Genomic_DNA"/>
</dbReference>
<dbReference type="RefSeq" id="WP_011256585.1">
    <property type="nucleotide sequence ID" value="NC_006833.1"/>
</dbReference>
<dbReference type="SMR" id="Q5GSP9"/>
<dbReference type="STRING" id="292805.Wbm0387"/>
<dbReference type="KEGG" id="wbm:Wbm0387"/>
<dbReference type="eggNOG" id="COG1758">
    <property type="taxonomic scope" value="Bacteria"/>
</dbReference>
<dbReference type="HOGENOM" id="CLU_1937277_0_0_5"/>
<dbReference type="Proteomes" id="UP000000534">
    <property type="component" value="Chromosome"/>
</dbReference>
<dbReference type="GO" id="GO:0000428">
    <property type="term" value="C:DNA-directed RNA polymerase complex"/>
    <property type="evidence" value="ECO:0007669"/>
    <property type="project" value="UniProtKB-KW"/>
</dbReference>
<dbReference type="GO" id="GO:0003677">
    <property type="term" value="F:DNA binding"/>
    <property type="evidence" value="ECO:0007669"/>
    <property type="project" value="UniProtKB-UniRule"/>
</dbReference>
<dbReference type="GO" id="GO:0003899">
    <property type="term" value="F:DNA-directed RNA polymerase activity"/>
    <property type="evidence" value="ECO:0007669"/>
    <property type="project" value="UniProtKB-UniRule"/>
</dbReference>
<dbReference type="GO" id="GO:0006351">
    <property type="term" value="P:DNA-templated transcription"/>
    <property type="evidence" value="ECO:0007669"/>
    <property type="project" value="UniProtKB-UniRule"/>
</dbReference>
<dbReference type="Gene3D" id="3.90.940.10">
    <property type="match status" value="1"/>
</dbReference>
<dbReference type="HAMAP" id="MF_00366">
    <property type="entry name" value="RNApol_bact_RpoZ"/>
    <property type="match status" value="1"/>
</dbReference>
<dbReference type="InterPro" id="IPR003716">
    <property type="entry name" value="DNA-dir_RNA_pol_omega"/>
</dbReference>
<dbReference type="InterPro" id="IPR006110">
    <property type="entry name" value="Pol_omega/Rpo6/RPB6"/>
</dbReference>
<dbReference type="InterPro" id="IPR036161">
    <property type="entry name" value="RPB6/omega-like_sf"/>
</dbReference>
<dbReference type="NCBIfam" id="TIGR00690">
    <property type="entry name" value="rpoZ"/>
    <property type="match status" value="1"/>
</dbReference>
<dbReference type="PANTHER" id="PTHR34476">
    <property type="entry name" value="DNA-DIRECTED RNA POLYMERASE SUBUNIT OMEGA"/>
    <property type="match status" value="1"/>
</dbReference>
<dbReference type="PANTHER" id="PTHR34476:SF1">
    <property type="entry name" value="DNA-DIRECTED RNA POLYMERASE SUBUNIT OMEGA"/>
    <property type="match status" value="1"/>
</dbReference>
<dbReference type="Pfam" id="PF01192">
    <property type="entry name" value="RNA_pol_Rpb6"/>
    <property type="match status" value="1"/>
</dbReference>
<dbReference type="SMART" id="SM01409">
    <property type="entry name" value="RNA_pol_Rpb6"/>
    <property type="match status" value="1"/>
</dbReference>
<dbReference type="SUPFAM" id="SSF63562">
    <property type="entry name" value="RPB6/omega subunit-like"/>
    <property type="match status" value="1"/>
</dbReference>
<reference key="1">
    <citation type="journal article" date="2005" name="PLoS Biol.">
        <title>The Wolbachia genome of Brugia malayi: endosymbiont evolution within a human pathogenic nematode.</title>
        <authorList>
            <person name="Foster J."/>
            <person name="Ganatra M."/>
            <person name="Kamal I."/>
            <person name="Ware J."/>
            <person name="Makarova K."/>
            <person name="Ivanova N."/>
            <person name="Bhattacharyya A."/>
            <person name="Kapatral V."/>
            <person name="Kumar S."/>
            <person name="Posfai J."/>
            <person name="Vincze T."/>
            <person name="Ingram J."/>
            <person name="Moran L."/>
            <person name="Lapidus A."/>
            <person name="Omelchenko M."/>
            <person name="Kyrpides N."/>
            <person name="Ghedin E."/>
            <person name="Wang S."/>
            <person name="Goltsman E."/>
            <person name="Joukov V."/>
            <person name="Ostrovskaya O."/>
            <person name="Tsukerman K."/>
            <person name="Mazur M."/>
            <person name="Comb D."/>
            <person name="Koonin E."/>
            <person name="Slatko B."/>
        </authorList>
    </citation>
    <scope>NUCLEOTIDE SEQUENCE [LARGE SCALE GENOMIC DNA]</scope>
    <source>
        <strain>TRS</strain>
    </source>
</reference>
<accession>Q5GSP9</accession>
<organism>
    <name type="scientific">Wolbachia sp. subsp. Brugia malayi (strain TRS)</name>
    <dbReference type="NCBI Taxonomy" id="292805"/>
    <lineage>
        <taxon>Bacteria</taxon>
        <taxon>Pseudomonadati</taxon>
        <taxon>Pseudomonadota</taxon>
        <taxon>Alphaproteobacteria</taxon>
        <taxon>Rickettsiales</taxon>
        <taxon>Anaplasmataceae</taxon>
        <taxon>Wolbachieae</taxon>
        <taxon>Wolbachia</taxon>
    </lineage>
</organism>
<sequence length="142" mass="16145">MAESVIEKCTEQVSNRFKLALLASQRTHDLNTGASNPVQSARFKGHKNTIISLYEIAERQVDTHELFSLLVSRCKEYMKGNLSNTYSSNTSKLEKLLNFSNDQFNTDADVDQESTDIQDDEVENEMSNQDSEDIDDEVDNEE</sequence>
<comment type="function">
    <text evidence="1">Promotes RNA polymerase assembly. Latches the N- and C-terminal regions of the beta' subunit thereby facilitating its interaction with the beta and alpha subunits.</text>
</comment>
<comment type="catalytic activity">
    <reaction evidence="1">
        <text>RNA(n) + a ribonucleoside 5'-triphosphate = RNA(n+1) + diphosphate</text>
        <dbReference type="Rhea" id="RHEA:21248"/>
        <dbReference type="Rhea" id="RHEA-COMP:14527"/>
        <dbReference type="Rhea" id="RHEA-COMP:17342"/>
        <dbReference type="ChEBI" id="CHEBI:33019"/>
        <dbReference type="ChEBI" id="CHEBI:61557"/>
        <dbReference type="ChEBI" id="CHEBI:140395"/>
        <dbReference type="EC" id="2.7.7.6"/>
    </reaction>
</comment>
<comment type="subunit">
    <text evidence="1">The RNAP catalytic core consists of 2 alpha, 1 beta, 1 beta' and 1 omega subunit. When a sigma factor is associated with the core the holoenzyme is formed, which can initiate transcription.</text>
</comment>
<comment type="similarity">
    <text evidence="1">Belongs to the RNA polymerase subunit omega family.</text>
</comment>
<evidence type="ECO:0000255" key="1">
    <source>
        <dbReference type="HAMAP-Rule" id="MF_00366"/>
    </source>
</evidence>
<evidence type="ECO:0000256" key="2">
    <source>
        <dbReference type="SAM" id="MobiDB-lite"/>
    </source>
</evidence>
<gene>
    <name evidence="1" type="primary">rpoZ</name>
    <name type="ordered locus">Wbm0387</name>
</gene>
<proteinExistence type="inferred from homology"/>
<name>RPOZ_WOLTR</name>